<dbReference type="EMBL" id="CP000469">
    <property type="protein sequence ID" value="ABK46462.1"/>
    <property type="molecule type" value="Genomic_DNA"/>
</dbReference>
<dbReference type="RefSeq" id="WP_011070628.1">
    <property type="nucleotide sequence ID" value="NC_008577.1"/>
</dbReference>
<dbReference type="SMR" id="A0KRP3"/>
<dbReference type="STRING" id="94122.Shewana3_0218"/>
<dbReference type="GeneID" id="94726205"/>
<dbReference type="KEGG" id="shn:Shewana3_0218"/>
<dbReference type="eggNOG" id="COG0200">
    <property type="taxonomic scope" value="Bacteria"/>
</dbReference>
<dbReference type="HOGENOM" id="CLU_055188_4_2_6"/>
<dbReference type="OrthoDB" id="9810293at2"/>
<dbReference type="Proteomes" id="UP000002589">
    <property type="component" value="Chromosome"/>
</dbReference>
<dbReference type="GO" id="GO:0022625">
    <property type="term" value="C:cytosolic large ribosomal subunit"/>
    <property type="evidence" value="ECO:0007669"/>
    <property type="project" value="TreeGrafter"/>
</dbReference>
<dbReference type="GO" id="GO:0019843">
    <property type="term" value="F:rRNA binding"/>
    <property type="evidence" value="ECO:0007669"/>
    <property type="project" value="UniProtKB-UniRule"/>
</dbReference>
<dbReference type="GO" id="GO:0003735">
    <property type="term" value="F:structural constituent of ribosome"/>
    <property type="evidence" value="ECO:0007669"/>
    <property type="project" value="InterPro"/>
</dbReference>
<dbReference type="GO" id="GO:0006412">
    <property type="term" value="P:translation"/>
    <property type="evidence" value="ECO:0007669"/>
    <property type="project" value="UniProtKB-UniRule"/>
</dbReference>
<dbReference type="FunFam" id="3.100.10.10:FF:000003">
    <property type="entry name" value="50S ribosomal protein L15"/>
    <property type="match status" value="1"/>
</dbReference>
<dbReference type="Gene3D" id="3.100.10.10">
    <property type="match status" value="1"/>
</dbReference>
<dbReference type="HAMAP" id="MF_01341">
    <property type="entry name" value="Ribosomal_uL15"/>
    <property type="match status" value="1"/>
</dbReference>
<dbReference type="InterPro" id="IPR030878">
    <property type="entry name" value="Ribosomal_uL15"/>
</dbReference>
<dbReference type="InterPro" id="IPR021131">
    <property type="entry name" value="Ribosomal_uL15/eL18"/>
</dbReference>
<dbReference type="InterPro" id="IPR036227">
    <property type="entry name" value="Ribosomal_uL15/eL18_sf"/>
</dbReference>
<dbReference type="InterPro" id="IPR005749">
    <property type="entry name" value="Ribosomal_uL15_bac-type"/>
</dbReference>
<dbReference type="InterPro" id="IPR001196">
    <property type="entry name" value="Ribosomal_uL15_CS"/>
</dbReference>
<dbReference type="NCBIfam" id="TIGR01071">
    <property type="entry name" value="rplO_bact"/>
    <property type="match status" value="1"/>
</dbReference>
<dbReference type="PANTHER" id="PTHR12934">
    <property type="entry name" value="50S RIBOSOMAL PROTEIN L15"/>
    <property type="match status" value="1"/>
</dbReference>
<dbReference type="PANTHER" id="PTHR12934:SF11">
    <property type="entry name" value="LARGE RIBOSOMAL SUBUNIT PROTEIN UL15M"/>
    <property type="match status" value="1"/>
</dbReference>
<dbReference type="Pfam" id="PF00828">
    <property type="entry name" value="Ribosomal_L27A"/>
    <property type="match status" value="1"/>
</dbReference>
<dbReference type="SUPFAM" id="SSF52080">
    <property type="entry name" value="Ribosomal proteins L15p and L18e"/>
    <property type="match status" value="1"/>
</dbReference>
<dbReference type="PROSITE" id="PS00475">
    <property type="entry name" value="RIBOSOMAL_L15"/>
    <property type="match status" value="1"/>
</dbReference>
<evidence type="ECO:0000255" key="1">
    <source>
        <dbReference type="HAMAP-Rule" id="MF_01341"/>
    </source>
</evidence>
<evidence type="ECO:0000256" key="2">
    <source>
        <dbReference type="SAM" id="MobiDB-lite"/>
    </source>
</evidence>
<evidence type="ECO:0000305" key="3"/>
<proteinExistence type="inferred from homology"/>
<name>RL15_SHESA</name>
<keyword id="KW-0687">Ribonucleoprotein</keyword>
<keyword id="KW-0689">Ribosomal protein</keyword>
<keyword id="KW-0694">RNA-binding</keyword>
<keyword id="KW-0699">rRNA-binding</keyword>
<protein>
    <recommendedName>
        <fullName evidence="1">Large ribosomal subunit protein uL15</fullName>
    </recommendedName>
    <alternativeName>
        <fullName evidence="3">50S ribosomal protein L15</fullName>
    </alternativeName>
</protein>
<organism>
    <name type="scientific">Shewanella sp. (strain ANA-3)</name>
    <dbReference type="NCBI Taxonomy" id="94122"/>
    <lineage>
        <taxon>Bacteria</taxon>
        <taxon>Pseudomonadati</taxon>
        <taxon>Pseudomonadota</taxon>
        <taxon>Gammaproteobacteria</taxon>
        <taxon>Alteromonadales</taxon>
        <taxon>Shewanellaceae</taxon>
        <taxon>Shewanella</taxon>
    </lineage>
</organism>
<accession>A0KRP3</accession>
<gene>
    <name evidence="1" type="primary">rplO</name>
    <name type="ordered locus">Shewana3_0218</name>
</gene>
<feature type="chain" id="PRO_1000054541" description="Large ribosomal subunit protein uL15">
    <location>
        <begin position="1"/>
        <end position="144"/>
    </location>
</feature>
<feature type="region of interest" description="Disordered" evidence="2">
    <location>
        <begin position="1"/>
        <end position="54"/>
    </location>
</feature>
<feature type="compositionally biased region" description="Gly residues" evidence="2">
    <location>
        <begin position="21"/>
        <end position="31"/>
    </location>
</feature>
<feature type="compositionally biased region" description="Gly residues" evidence="2">
    <location>
        <begin position="42"/>
        <end position="52"/>
    </location>
</feature>
<sequence length="144" mass="15081">MRLNTLSPAAGAKHAPKRVGRGMGSGLGKTAGRGHKGQKSRSGGGVRPGFEGGQMPLKIRLPKFGFTSRRAMVTAEVRVLELAKVNGDVIDLNALKDANVITRNIQFAKIVLSGTIERPVTVKGLKVTKGARAAIEAAGGKIEE</sequence>
<reference key="1">
    <citation type="submission" date="2006-09" db="EMBL/GenBank/DDBJ databases">
        <title>Complete sequence of chromosome 1 of Shewanella sp. ANA-3.</title>
        <authorList>
            <person name="Copeland A."/>
            <person name="Lucas S."/>
            <person name="Lapidus A."/>
            <person name="Barry K."/>
            <person name="Detter J.C."/>
            <person name="Glavina del Rio T."/>
            <person name="Hammon N."/>
            <person name="Israni S."/>
            <person name="Dalin E."/>
            <person name="Tice H."/>
            <person name="Pitluck S."/>
            <person name="Chertkov O."/>
            <person name="Brettin T."/>
            <person name="Bruce D."/>
            <person name="Han C."/>
            <person name="Tapia R."/>
            <person name="Gilna P."/>
            <person name="Schmutz J."/>
            <person name="Larimer F."/>
            <person name="Land M."/>
            <person name="Hauser L."/>
            <person name="Kyrpides N."/>
            <person name="Kim E."/>
            <person name="Newman D."/>
            <person name="Salticov C."/>
            <person name="Konstantinidis K."/>
            <person name="Klappenback J."/>
            <person name="Tiedje J."/>
            <person name="Richardson P."/>
        </authorList>
    </citation>
    <scope>NUCLEOTIDE SEQUENCE [LARGE SCALE GENOMIC DNA]</scope>
    <source>
        <strain>ANA-3</strain>
    </source>
</reference>
<comment type="function">
    <text evidence="1">Binds to the 23S rRNA.</text>
</comment>
<comment type="subunit">
    <text evidence="1">Part of the 50S ribosomal subunit.</text>
</comment>
<comment type="similarity">
    <text evidence="1">Belongs to the universal ribosomal protein uL15 family.</text>
</comment>